<feature type="signal peptide" evidence="2">
    <location>
        <begin position="1"/>
        <end position="25"/>
    </location>
</feature>
<feature type="chain" id="PRO_0000024892" description="Pectate lyase">
    <location>
        <begin position="26"/>
        <end position="397"/>
    </location>
</feature>
<feature type="active site" evidence="2">
    <location>
        <position position="272"/>
    </location>
</feature>
<feature type="binding site" evidence="1">
    <location>
        <position position="191"/>
    </location>
    <ligand>
        <name>Ca(2+)</name>
        <dbReference type="ChEBI" id="CHEBI:29108"/>
    </ligand>
</feature>
<feature type="binding site" evidence="1">
    <location>
        <position position="216"/>
    </location>
    <ligand>
        <name>Ca(2+)</name>
        <dbReference type="ChEBI" id="CHEBI:29108"/>
    </ligand>
</feature>
<feature type="binding site" evidence="1">
    <location>
        <position position="220"/>
    </location>
    <ligand>
        <name>Ca(2+)</name>
        <dbReference type="ChEBI" id="CHEBI:29108"/>
    </ligand>
</feature>
<feature type="glycosylation site" description="N-linked (GlcNAc...) asparagine" evidence="2">
    <location>
        <position position="134"/>
    </location>
</feature>
<feature type="glycosylation site" description="N-linked (GlcNAc...) asparagine" evidence="2">
    <location>
        <position position="227"/>
    </location>
</feature>
<feature type="sequence conflict" description="In Ref. 1; CAA47631." evidence="3" ref="1">
    <original>S</original>
    <variation>C</variation>
    <location>
        <position position="156"/>
    </location>
</feature>
<feature type="sequence conflict" description="In Ref. 1; CAA47631." evidence="3" ref="1">
    <original>GS</original>
    <variation>SG</variation>
    <location>
        <begin position="189"/>
        <end position="190"/>
    </location>
</feature>
<feature type="sequence conflict" description="In Ref. 1; CAA47631." evidence="3" ref="1">
    <original>SSH</original>
    <variation>DSR</variation>
    <location>
        <begin position="200"/>
        <end position="202"/>
    </location>
</feature>
<feature type="sequence conflict" description="In Ref. 1; CAA47631." evidence="3" ref="1">
    <original>H</original>
    <variation>N</variation>
    <location>
        <position position="249"/>
    </location>
</feature>
<evidence type="ECO:0000250" key="1"/>
<evidence type="ECO:0000255" key="2"/>
<evidence type="ECO:0000305" key="3"/>
<reference key="1">
    <citation type="journal article" date="1992" name="Plant Mol. Biol.">
        <title>Isolation and characterization of a tobacco gene with homology to pectate lyase which is specifically expressed during microsporogenesis.</title>
        <authorList>
            <person name="Rogers H.J."/>
            <person name="Harvey A."/>
            <person name="Lonsdale D.M."/>
        </authorList>
    </citation>
    <scope>NUCLEOTIDE SEQUENCE [GENOMIC DNA / MRNA]</scope>
    <source>
        <strain>cv. Samsun</strain>
        <tissue>Pollen</tissue>
    </source>
</reference>
<accession>P40972</accession>
<comment type="catalytic activity">
    <reaction>
        <text>Eliminative cleavage of (1-&gt;4)-alpha-D-galacturonan to give oligosaccharides with 4-deoxy-alpha-D-galact-4-enuronosyl groups at their non-reducing ends.</text>
        <dbReference type="EC" id="4.2.2.2"/>
    </reaction>
</comment>
<comment type="cofactor">
    <cofactor evidence="1">
        <name>Ca(2+)</name>
        <dbReference type="ChEBI" id="CHEBI:29108"/>
    </cofactor>
    <text evidence="1">Binds 1 Ca(2+) ion. Required for its activity.</text>
</comment>
<comment type="pathway">
    <text>Glycan metabolism; pectin degradation; 2-dehydro-3-deoxy-D-gluconate from pectin: step 2/5.</text>
</comment>
<comment type="developmental stage">
    <text>Maximally expressed late in pollen development.</text>
</comment>
<comment type="similarity">
    <text evidence="3">Belongs to the polysaccharide lyase 1 family.</text>
</comment>
<protein>
    <recommendedName>
        <fullName>Pectate lyase</fullName>
        <ecNumber>4.2.2.2</ecNumber>
    </recommendedName>
</protein>
<sequence>MDVYRIRISVFFLLVLLTFAALTTATNIPRRQLSNKKYKGPCRAENAIDKCWRCDPNWAENRQKMADCALGFGSNAIGGKLGRIYVVTDNSDDDVVDPKPGTLRYGVIQKEPLWIIFGKNMKIKLSRELIVTSNKTIDGRGFNVHIQNGAGIKIQSASNIIISNLRIHNIVPTPGGLLRESEDHVGLRGSDEGDGISIFSSHDIWIDHISMSRATDGLIDAVAASTNITISNCHFTDHEKVMLFGANDHYVLDKDMKITLAYNHFGKRLDQRMPRCRFGFFHLVNNDYTHWERYAIGGSSGATIISQGNRFIAEDELLVKEVTYREKLTASVAEWMKWTWISDGDDMENGATFTPSGDQNLLDKIDHLNLIKPEPSSKVGILTKFSGALSCVKGRPC</sequence>
<keyword id="KW-0106">Calcium</keyword>
<keyword id="KW-0325">Glycoprotein</keyword>
<keyword id="KW-0456">Lyase</keyword>
<keyword id="KW-0479">Metal-binding</keyword>
<keyword id="KW-1185">Reference proteome</keyword>
<keyword id="KW-0732">Signal</keyword>
<organism>
    <name type="scientific">Nicotiana tabacum</name>
    <name type="common">Common tobacco</name>
    <dbReference type="NCBI Taxonomy" id="4097"/>
    <lineage>
        <taxon>Eukaryota</taxon>
        <taxon>Viridiplantae</taxon>
        <taxon>Streptophyta</taxon>
        <taxon>Embryophyta</taxon>
        <taxon>Tracheophyta</taxon>
        <taxon>Spermatophyta</taxon>
        <taxon>Magnoliopsida</taxon>
        <taxon>eudicotyledons</taxon>
        <taxon>Gunneridae</taxon>
        <taxon>Pentapetalae</taxon>
        <taxon>asterids</taxon>
        <taxon>lamiids</taxon>
        <taxon>Solanales</taxon>
        <taxon>Solanaceae</taxon>
        <taxon>Nicotianoideae</taxon>
        <taxon>Nicotianeae</taxon>
        <taxon>Nicotiana</taxon>
    </lineage>
</organism>
<name>PLY_TOBAC</name>
<dbReference type="EC" id="4.2.2.2"/>
<dbReference type="EMBL" id="X67158">
    <property type="protein sequence ID" value="CAA47630.1"/>
    <property type="molecule type" value="Genomic_DNA"/>
</dbReference>
<dbReference type="EMBL" id="X67159">
    <property type="protein sequence ID" value="CAA47631.1"/>
    <property type="molecule type" value="mRNA"/>
</dbReference>
<dbReference type="EMBL" id="X61102">
    <property type="protein sequence ID" value="CAA43414.1"/>
    <property type="molecule type" value="Genomic_DNA"/>
</dbReference>
<dbReference type="PIR" id="S26211">
    <property type="entry name" value="S26211"/>
</dbReference>
<dbReference type="RefSeq" id="XP_016483544.1">
    <property type="nucleotide sequence ID" value="XM_016628058.1"/>
</dbReference>
<dbReference type="SMR" id="P40972"/>
<dbReference type="STRING" id="4097.P40972"/>
<dbReference type="CAZy" id="PL1">
    <property type="family name" value="Polysaccharide Lyase Family 1"/>
</dbReference>
<dbReference type="PaxDb" id="4097-P40972"/>
<dbReference type="GeneID" id="107804209"/>
<dbReference type="KEGG" id="nta:107804209"/>
<dbReference type="OMA" id="NSHDIWI"/>
<dbReference type="OrthoDB" id="1637350at2759"/>
<dbReference type="UniPathway" id="UPA00545">
    <property type="reaction ID" value="UER00824"/>
</dbReference>
<dbReference type="Proteomes" id="UP000084051">
    <property type="component" value="Unplaced"/>
</dbReference>
<dbReference type="GO" id="GO:0046872">
    <property type="term" value="F:metal ion binding"/>
    <property type="evidence" value="ECO:0007669"/>
    <property type="project" value="UniProtKB-KW"/>
</dbReference>
<dbReference type="GO" id="GO:0030570">
    <property type="term" value="F:pectate lyase activity"/>
    <property type="evidence" value="ECO:0007669"/>
    <property type="project" value="UniProtKB-EC"/>
</dbReference>
<dbReference type="GO" id="GO:0045490">
    <property type="term" value="P:pectin catabolic process"/>
    <property type="evidence" value="ECO:0007669"/>
    <property type="project" value="UniProtKB-UniPathway"/>
</dbReference>
<dbReference type="Gene3D" id="2.160.20.10">
    <property type="entry name" value="Single-stranded right-handed beta-helix, Pectin lyase-like"/>
    <property type="match status" value="1"/>
</dbReference>
<dbReference type="InterPro" id="IPR018082">
    <property type="entry name" value="AmbAllergen"/>
</dbReference>
<dbReference type="InterPro" id="IPR002022">
    <property type="entry name" value="Pec_lyase"/>
</dbReference>
<dbReference type="InterPro" id="IPR012334">
    <property type="entry name" value="Pectin_lyas_fold"/>
</dbReference>
<dbReference type="InterPro" id="IPR011050">
    <property type="entry name" value="Pectin_lyase_fold/virulence"/>
</dbReference>
<dbReference type="InterPro" id="IPR045032">
    <property type="entry name" value="PEL"/>
</dbReference>
<dbReference type="PANTHER" id="PTHR31683">
    <property type="entry name" value="PECTATE LYASE 18-RELATED"/>
    <property type="match status" value="1"/>
</dbReference>
<dbReference type="PANTHER" id="PTHR31683:SF82">
    <property type="entry name" value="PECTATE LYASE P56-RELATED"/>
    <property type="match status" value="1"/>
</dbReference>
<dbReference type="Pfam" id="PF00544">
    <property type="entry name" value="Pectate_lyase_4"/>
    <property type="match status" value="1"/>
</dbReference>
<dbReference type="PRINTS" id="PR00807">
    <property type="entry name" value="AMBALLERGEN"/>
</dbReference>
<dbReference type="SMART" id="SM00656">
    <property type="entry name" value="Amb_all"/>
    <property type="match status" value="1"/>
</dbReference>
<dbReference type="SUPFAM" id="SSF51126">
    <property type="entry name" value="Pectin lyase-like"/>
    <property type="match status" value="1"/>
</dbReference>
<proteinExistence type="evidence at transcript level"/>